<comment type="function">
    <text evidence="1">Catalyzes the isomerization between 2-isopropylmalate and 3-isopropylmalate, via the formation of 2-isopropylmaleate.</text>
</comment>
<comment type="catalytic activity">
    <reaction evidence="1">
        <text>(2R,3S)-3-isopropylmalate = (2S)-2-isopropylmalate</text>
        <dbReference type="Rhea" id="RHEA:32287"/>
        <dbReference type="ChEBI" id="CHEBI:1178"/>
        <dbReference type="ChEBI" id="CHEBI:35121"/>
        <dbReference type="EC" id="4.2.1.33"/>
    </reaction>
</comment>
<comment type="pathway">
    <text evidence="1">Amino-acid biosynthesis; L-leucine biosynthesis; L-leucine from 3-methyl-2-oxobutanoate: step 2/4.</text>
</comment>
<comment type="subunit">
    <text evidence="1">Heterodimer of LeuC and LeuD.</text>
</comment>
<comment type="similarity">
    <text evidence="1">Belongs to the LeuD family. LeuD type 1 subfamily.</text>
</comment>
<name>LEUD_SHEB2</name>
<accession>B8E4K7</accession>
<feature type="chain" id="PRO_1000149424" description="3-isopropylmalate dehydratase small subunit">
    <location>
        <begin position="1"/>
        <end position="201"/>
    </location>
</feature>
<organism>
    <name type="scientific">Shewanella baltica (strain OS223)</name>
    <dbReference type="NCBI Taxonomy" id="407976"/>
    <lineage>
        <taxon>Bacteria</taxon>
        <taxon>Pseudomonadati</taxon>
        <taxon>Pseudomonadota</taxon>
        <taxon>Gammaproteobacteria</taxon>
        <taxon>Alteromonadales</taxon>
        <taxon>Shewanellaceae</taxon>
        <taxon>Shewanella</taxon>
    </lineage>
</organism>
<gene>
    <name evidence="1" type="primary">leuD</name>
    <name type="ordered locus">Sbal223_0414</name>
</gene>
<sequence length="201" mass="22034">MQPFTTHTGLAVMIDSTNIDTDQIIPKQFLSKVTRDGFGVHLFHDWRYLDDAGDQPNPEFSLNQSRYKGASILLAQENFGCGSSREHAPWALVDFGLRAIIAPSFADIFYGNSINNGLLPVALTHAQVRQLMDEVAAEAGAQITVDLTSCKVISPSGAEFSFTLAESARHKLLNGLDAIGLTLSHAAQISQYETQIQGWRR</sequence>
<keyword id="KW-0028">Amino-acid biosynthesis</keyword>
<keyword id="KW-0100">Branched-chain amino acid biosynthesis</keyword>
<keyword id="KW-0432">Leucine biosynthesis</keyword>
<keyword id="KW-0456">Lyase</keyword>
<protein>
    <recommendedName>
        <fullName evidence="1">3-isopropylmalate dehydratase small subunit</fullName>
        <ecNumber evidence="1">4.2.1.33</ecNumber>
    </recommendedName>
    <alternativeName>
        <fullName evidence="1">Alpha-IPM isomerase</fullName>
        <shortName evidence="1">IPMI</shortName>
    </alternativeName>
    <alternativeName>
        <fullName evidence="1">Isopropylmalate isomerase</fullName>
    </alternativeName>
</protein>
<reference key="1">
    <citation type="submission" date="2008-12" db="EMBL/GenBank/DDBJ databases">
        <title>Complete sequence of chromosome of Shewanella baltica OS223.</title>
        <authorList>
            <consortium name="US DOE Joint Genome Institute"/>
            <person name="Lucas S."/>
            <person name="Copeland A."/>
            <person name="Lapidus A."/>
            <person name="Glavina del Rio T."/>
            <person name="Dalin E."/>
            <person name="Tice H."/>
            <person name="Bruce D."/>
            <person name="Goodwin L."/>
            <person name="Pitluck S."/>
            <person name="Chertkov O."/>
            <person name="Meincke L."/>
            <person name="Brettin T."/>
            <person name="Detter J.C."/>
            <person name="Han C."/>
            <person name="Kuske C.R."/>
            <person name="Larimer F."/>
            <person name="Land M."/>
            <person name="Hauser L."/>
            <person name="Kyrpides N."/>
            <person name="Ovchinnikova G."/>
            <person name="Brettar I."/>
            <person name="Rodrigues J."/>
            <person name="Konstantinidis K."/>
            <person name="Tiedje J."/>
        </authorList>
    </citation>
    <scope>NUCLEOTIDE SEQUENCE [LARGE SCALE GENOMIC DNA]</scope>
    <source>
        <strain>OS223</strain>
    </source>
</reference>
<evidence type="ECO:0000255" key="1">
    <source>
        <dbReference type="HAMAP-Rule" id="MF_01031"/>
    </source>
</evidence>
<dbReference type="EC" id="4.2.1.33" evidence="1"/>
<dbReference type="EMBL" id="CP001252">
    <property type="protein sequence ID" value="ACK44948.1"/>
    <property type="molecule type" value="Genomic_DNA"/>
</dbReference>
<dbReference type="RefSeq" id="WP_006086690.1">
    <property type="nucleotide sequence ID" value="NC_011663.1"/>
</dbReference>
<dbReference type="SMR" id="B8E4K7"/>
<dbReference type="GeneID" id="11770739"/>
<dbReference type="KEGG" id="sbp:Sbal223_0414"/>
<dbReference type="HOGENOM" id="CLU_081378_0_3_6"/>
<dbReference type="UniPathway" id="UPA00048">
    <property type="reaction ID" value="UER00071"/>
</dbReference>
<dbReference type="Proteomes" id="UP000002507">
    <property type="component" value="Chromosome"/>
</dbReference>
<dbReference type="GO" id="GO:0009316">
    <property type="term" value="C:3-isopropylmalate dehydratase complex"/>
    <property type="evidence" value="ECO:0007669"/>
    <property type="project" value="InterPro"/>
</dbReference>
<dbReference type="GO" id="GO:0003861">
    <property type="term" value="F:3-isopropylmalate dehydratase activity"/>
    <property type="evidence" value="ECO:0007669"/>
    <property type="project" value="UniProtKB-UniRule"/>
</dbReference>
<dbReference type="GO" id="GO:0009098">
    <property type="term" value="P:L-leucine biosynthetic process"/>
    <property type="evidence" value="ECO:0007669"/>
    <property type="project" value="UniProtKB-UniRule"/>
</dbReference>
<dbReference type="CDD" id="cd01577">
    <property type="entry name" value="IPMI_Swivel"/>
    <property type="match status" value="1"/>
</dbReference>
<dbReference type="FunFam" id="3.20.19.10:FF:000003">
    <property type="entry name" value="3-isopropylmalate dehydratase small subunit"/>
    <property type="match status" value="1"/>
</dbReference>
<dbReference type="Gene3D" id="3.20.19.10">
    <property type="entry name" value="Aconitase, domain 4"/>
    <property type="match status" value="1"/>
</dbReference>
<dbReference type="HAMAP" id="MF_01031">
    <property type="entry name" value="LeuD_type1"/>
    <property type="match status" value="1"/>
</dbReference>
<dbReference type="InterPro" id="IPR004431">
    <property type="entry name" value="3-IsopropMal_deHydase_ssu"/>
</dbReference>
<dbReference type="InterPro" id="IPR015928">
    <property type="entry name" value="Aconitase/3IPM_dehydase_swvl"/>
</dbReference>
<dbReference type="InterPro" id="IPR000573">
    <property type="entry name" value="AconitaseA/IPMdHydase_ssu_swvl"/>
</dbReference>
<dbReference type="InterPro" id="IPR033940">
    <property type="entry name" value="IPMI_Swivel"/>
</dbReference>
<dbReference type="InterPro" id="IPR050075">
    <property type="entry name" value="LeuD"/>
</dbReference>
<dbReference type="NCBIfam" id="TIGR00171">
    <property type="entry name" value="leuD"/>
    <property type="match status" value="1"/>
</dbReference>
<dbReference type="NCBIfam" id="NF002458">
    <property type="entry name" value="PRK01641.1"/>
    <property type="match status" value="1"/>
</dbReference>
<dbReference type="PANTHER" id="PTHR43345:SF5">
    <property type="entry name" value="3-ISOPROPYLMALATE DEHYDRATASE SMALL SUBUNIT"/>
    <property type="match status" value="1"/>
</dbReference>
<dbReference type="PANTHER" id="PTHR43345">
    <property type="entry name" value="3-ISOPROPYLMALATE DEHYDRATASE SMALL SUBUNIT 2-RELATED-RELATED"/>
    <property type="match status" value="1"/>
</dbReference>
<dbReference type="Pfam" id="PF00694">
    <property type="entry name" value="Aconitase_C"/>
    <property type="match status" value="1"/>
</dbReference>
<dbReference type="SUPFAM" id="SSF52016">
    <property type="entry name" value="LeuD/IlvD-like"/>
    <property type="match status" value="1"/>
</dbReference>
<proteinExistence type="inferred from homology"/>